<dbReference type="EC" id="3.4.21.-"/>
<dbReference type="EMBL" id="AP009324">
    <property type="protein sequence ID" value="BAF78679.1"/>
    <property type="molecule type" value="Genomic_DNA"/>
</dbReference>
<dbReference type="RefSeq" id="WP_001038872.1">
    <property type="nucleotide sequence ID" value="NC_009782.1"/>
</dbReference>
<dbReference type="SMR" id="A7X3Q7"/>
<dbReference type="MEROPS" id="S01.283"/>
<dbReference type="KEGG" id="saw:SAHV_1796"/>
<dbReference type="HOGENOM" id="CLU_073589_2_0_9"/>
<dbReference type="GO" id="GO:0005576">
    <property type="term" value="C:extracellular region"/>
    <property type="evidence" value="ECO:0007669"/>
    <property type="project" value="UniProtKB-SubCell"/>
</dbReference>
<dbReference type="GO" id="GO:0004252">
    <property type="term" value="F:serine-type endopeptidase activity"/>
    <property type="evidence" value="ECO:0007669"/>
    <property type="project" value="InterPro"/>
</dbReference>
<dbReference type="GO" id="GO:0006508">
    <property type="term" value="P:proteolysis"/>
    <property type="evidence" value="ECO:0007669"/>
    <property type="project" value="UniProtKB-KW"/>
</dbReference>
<dbReference type="Gene3D" id="2.40.10.10">
    <property type="entry name" value="Trypsin-like serine proteases"/>
    <property type="match status" value="2"/>
</dbReference>
<dbReference type="InterPro" id="IPR009003">
    <property type="entry name" value="Peptidase_S1_PA"/>
</dbReference>
<dbReference type="InterPro" id="IPR043504">
    <property type="entry name" value="Peptidase_S1_PA_chymotrypsin"/>
</dbReference>
<dbReference type="InterPro" id="IPR008256">
    <property type="entry name" value="Peptidase_S1B"/>
</dbReference>
<dbReference type="InterPro" id="IPR008353">
    <property type="entry name" value="Peptidase_S1B_tx"/>
</dbReference>
<dbReference type="InterPro" id="IPR001254">
    <property type="entry name" value="Trypsin_dom"/>
</dbReference>
<dbReference type="InterPro" id="IPR028301">
    <property type="entry name" value="V8_his_AS"/>
</dbReference>
<dbReference type="PANTHER" id="PTHR43019:SF23">
    <property type="entry name" value="PROTEASE DO-LIKE 5, CHLOROPLASTIC"/>
    <property type="match status" value="1"/>
</dbReference>
<dbReference type="PANTHER" id="PTHR43019">
    <property type="entry name" value="SERINE ENDOPROTEASE DEGS"/>
    <property type="match status" value="1"/>
</dbReference>
<dbReference type="Pfam" id="PF00089">
    <property type="entry name" value="Trypsin"/>
    <property type="match status" value="1"/>
</dbReference>
<dbReference type="PRINTS" id="PR01774">
    <property type="entry name" value="EXFOLTOXIN"/>
</dbReference>
<dbReference type="PRINTS" id="PR00839">
    <property type="entry name" value="V8PROTEASE"/>
</dbReference>
<dbReference type="SUPFAM" id="SSF50494">
    <property type="entry name" value="Trypsin-like serine proteases"/>
    <property type="match status" value="1"/>
</dbReference>
<dbReference type="PROSITE" id="PS00672">
    <property type="entry name" value="V8_HIS"/>
    <property type="match status" value="1"/>
</dbReference>
<feature type="signal peptide" evidence="1">
    <location>
        <begin position="1"/>
        <end position="36"/>
    </location>
</feature>
<feature type="chain" id="PRO_0000359556" description="Serine protease SplC">
    <location>
        <begin position="37"/>
        <end position="239"/>
    </location>
</feature>
<feature type="active site" description="Charge relay system" evidence="1">
    <location>
        <position position="75"/>
    </location>
</feature>
<feature type="active site" description="Charge relay system" evidence="1">
    <location>
        <position position="113"/>
    </location>
</feature>
<feature type="active site" description="Charge relay system" evidence="1">
    <location>
        <position position="193"/>
    </location>
</feature>
<gene>
    <name type="primary">splC</name>
    <name type="ordered locus">SAHV_1796</name>
</gene>
<accession>A7X3Q7</accession>
<proteinExistence type="inferred from homology"/>
<name>SPLC_STAA1</name>
<comment type="subcellular location">
    <subcellularLocation>
        <location evidence="1">Secreted</location>
    </subcellularLocation>
</comment>
<comment type="similarity">
    <text evidence="2">Belongs to the peptidase S1B family.</text>
</comment>
<keyword id="KW-0378">Hydrolase</keyword>
<keyword id="KW-0645">Protease</keyword>
<keyword id="KW-0964">Secreted</keyword>
<keyword id="KW-0720">Serine protease</keyword>
<keyword id="KW-0732">Signal</keyword>
<protein>
    <recommendedName>
        <fullName>Serine protease SplC</fullName>
        <ecNumber>3.4.21.-</ecNumber>
    </recommendedName>
</protein>
<organism>
    <name type="scientific">Staphylococcus aureus (strain Mu3 / ATCC 700698)</name>
    <dbReference type="NCBI Taxonomy" id="418127"/>
    <lineage>
        <taxon>Bacteria</taxon>
        <taxon>Bacillati</taxon>
        <taxon>Bacillota</taxon>
        <taxon>Bacilli</taxon>
        <taxon>Bacillales</taxon>
        <taxon>Staphylococcaceae</taxon>
        <taxon>Staphylococcus</taxon>
    </lineage>
</organism>
<evidence type="ECO:0000250" key="1"/>
<evidence type="ECO:0000305" key="2"/>
<sequence length="239" mass="26099">MNKNIVIKSMAALAILTSVTGINAAVVEETQQIANAEKNVTQVKDTNNFPYNGVVSFKDATGFVIGKNTIITNKHVSKDYKVGDRITAHPNGDKGNGGIYKIKSISDYPGDEDISVMNIEEQAVERGPKGFNFNENVQAFNFAKDAKVDDKIKVIGYPLPAQNSFKQFESTGTIKRIKDNILNFDAYIEPGNSGSPVLNSNNEVIGVVYGGIGKIGSEYNGAVYFTPQIKDFIQKHIEQ</sequence>
<reference key="1">
    <citation type="journal article" date="2008" name="Antimicrob. Agents Chemother.">
        <title>Mutated response regulator graR is responsible for phenotypic conversion of Staphylococcus aureus from heterogeneous vancomycin-intermediate resistance to vancomycin-intermediate resistance.</title>
        <authorList>
            <person name="Neoh H.-M."/>
            <person name="Cui L."/>
            <person name="Yuzawa H."/>
            <person name="Takeuchi F."/>
            <person name="Matsuo M."/>
            <person name="Hiramatsu K."/>
        </authorList>
    </citation>
    <scope>NUCLEOTIDE SEQUENCE [LARGE SCALE GENOMIC DNA]</scope>
    <source>
        <strain>Mu3 / ATCC 700698</strain>
    </source>
</reference>